<feature type="chain" id="PRO_0000259995" description="Putative ZDHHC-type palmitoyltransferase 6">
    <location>
        <begin position="1"/>
        <end position="698"/>
    </location>
</feature>
<feature type="transmembrane region" description="Helical" evidence="3">
    <location>
        <begin position="263"/>
        <end position="283"/>
    </location>
</feature>
<feature type="transmembrane region" description="Helical" evidence="3">
    <location>
        <begin position="286"/>
        <end position="306"/>
    </location>
</feature>
<feature type="transmembrane region" description="Helical" evidence="3">
    <location>
        <begin position="312"/>
        <end position="332"/>
    </location>
</feature>
<feature type="transmembrane region" description="Helical" evidence="3">
    <location>
        <begin position="334"/>
        <end position="354"/>
    </location>
</feature>
<feature type="transmembrane region" description="Helical" evidence="3">
    <location>
        <begin position="439"/>
        <end position="459"/>
    </location>
</feature>
<feature type="transmembrane region" description="Helical" evidence="3">
    <location>
        <begin position="489"/>
        <end position="509"/>
    </location>
</feature>
<feature type="repeat" description="ANK 1" evidence="3">
    <location>
        <begin position="58"/>
        <end position="87"/>
    </location>
</feature>
<feature type="repeat" description="ANK 2" evidence="3">
    <location>
        <begin position="92"/>
        <end position="121"/>
    </location>
</feature>
<feature type="repeat" description="ANK 3" evidence="3">
    <location>
        <begin position="125"/>
        <end position="155"/>
    </location>
</feature>
<feature type="repeat" description="ANK 4" evidence="3">
    <location>
        <begin position="159"/>
        <end position="188"/>
    </location>
</feature>
<feature type="repeat" description="ANK 5" evidence="3">
    <location>
        <begin position="192"/>
        <end position="221"/>
    </location>
</feature>
<feature type="domain" description="DHHC" evidence="4">
    <location>
        <begin position="395"/>
        <end position="445"/>
    </location>
</feature>
<feature type="region of interest" description="Disordered" evidence="5">
    <location>
        <begin position="532"/>
        <end position="605"/>
    </location>
</feature>
<feature type="region of interest" description="Disordered" evidence="5">
    <location>
        <begin position="619"/>
        <end position="653"/>
    </location>
</feature>
<feature type="compositionally biased region" description="Low complexity" evidence="5">
    <location>
        <begin position="543"/>
        <end position="584"/>
    </location>
</feature>
<feature type="compositionally biased region" description="Polar residues" evidence="5">
    <location>
        <begin position="585"/>
        <end position="594"/>
    </location>
</feature>
<feature type="compositionally biased region" description="Low complexity" evidence="5">
    <location>
        <begin position="631"/>
        <end position="640"/>
    </location>
</feature>
<feature type="active site" description="S-palmitoyl cysteine intermediate" evidence="1">
    <location>
        <position position="425"/>
    </location>
</feature>
<feature type="glycosylation site" description="N-linked (GlcNAc...) asparagine" evidence="3">
    <location>
        <position position="517"/>
    </location>
</feature>
<feature type="glycosylation site" description="N-linked (GlcNAc...) asparagine" evidence="3">
    <location>
        <position position="549"/>
    </location>
</feature>
<feature type="glycosylation site" description="N-linked (GlcNAc...) asparagine" evidence="3">
    <location>
        <position position="550"/>
    </location>
</feature>
<feature type="glycosylation site" description="N-linked (GlcNAc...) asparagine" evidence="3">
    <location>
        <position position="554"/>
    </location>
</feature>
<feature type="glycosylation site" description="N-linked (GlcNAc...) asparagine" evidence="3">
    <location>
        <position position="555"/>
    </location>
</feature>
<feature type="glycosylation site" description="N-linked (GlcNAc...) asparagine" evidence="3">
    <location>
        <position position="564"/>
    </location>
</feature>
<feature type="glycosylation site" description="N-linked (GlcNAc...) asparagine" evidence="3">
    <location>
        <position position="565"/>
    </location>
</feature>
<feature type="glycosylation site" description="N-linked (GlcNAc...) asparagine" evidence="3">
    <location>
        <position position="584"/>
    </location>
</feature>
<feature type="glycosylation site" description="N-linked (GlcNAc...) asparagine" evidence="3">
    <location>
        <position position="635"/>
    </location>
</feature>
<sequence length="698" mass="79314">MIDHNNIIIGNSINSKTFSLIESVKNGKLKECIGYLEKIRLQNPSLDLGEIINSGDDCGNTALHWACYKKWYDIVKYLLSMGADPNIANTDELQTPFQWACIGGDLHIVKYVLNNGGDPHLQDKRGYNSLIHATQYNEISVVRYLLDKGGVNVDSPDFLQKTSLHWAAYQGHTQLLLFLVNKGADINALDSLGRSPLHWAAFKGNSDPIKALCDFGSKTMEKDSNNQSPSDICSSQNHNYLAHFIKTFNYHPFRKVGPLLYNIFWIIFAILLQLYFGFIFYHFTLIPALILFGASLTCCKLFIEPITLSNSPNPLLPTWMITSFTVSFVYYVRYVVPAFPNIILTHTITLFVYSSYYYCAFKLFFSDPGTVSSSTTSQDSKDFINAVEKELEIPEVCSTCLINKPIRAKHCRTCKRCVARFDHHCAWINNCVGVNNNLLFIILLCLFSLAYIISVTFNFKLMSIDENSPLYSEGKMEWWTYHYSTYKGLILFTIYKSFIMAWLARLLYVQITGVINNVTMFELMKPPKGSKKKCCNHAPQDQNNNNNNNNTTTNNSSSSSSSNNNSTGTNNDNNNNNNLGTSSNESGQSNCNIDQHNDHDGQSSEPLLNEVSIQIRSENGVEEDDDDENNKNPSNKSFNKNSRDLDPTQTNFRDSILIPKRTNNNENPYDKGSRENIREFLYDTSKWFRTTTFSNKNF</sequence>
<gene>
    <name type="ORF">DDB_G0275149</name>
</gene>
<proteinExistence type="evidence at transcript level"/>
<keyword id="KW-0012">Acyltransferase</keyword>
<keyword id="KW-0040">ANK repeat</keyword>
<keyword id="KW-0325">Glycoprotein</keyword>
<keyword id="KW-0449">Lipoprotein</keyword>
<keyword id="KW-0472">Membrane</keyword>
<keyword id="KW-0564">Palmitate</keyword>
<keyword id="KW-1185">Reference proteome</keyword>
<keyword id="KW-0677">Repeat</keyword>
<keyword id="KW-0808">Transferase</keyword>
<keyword id="KW-0812">Transmembrane</keyword>
<keyword id="KW-1133">Transmembrane helix</keyword>
<accession>Q8T2Q0</accession>
<accession>Q554I2</accession>
<organism>
    <name type="scientific">Dictyostelium discoideum</name>
    <name type="common">Social amoeba</name>
    <dbReference type="NCBI Taxonomy" id="44689"/>
    <lineage>
        <taxon>Eukaryota</taxon>
        <taxon>Amoebozoa</taxon>
        <taxon>Evosea</taxon>
        <taxon>Eumycetozoa</taxon>
        <taxon>Dictyostelia</taxon>
        <taxon>Dictyosteliales</taxon>
        <taxon>Dictyosteliaceae</taxon>
        <taxon>Dictyostelium</taxon>
    </lineage>
</organism>
<dbReference type="EC" id="2.3.1.225"/>
<dbReference type="EMBL" id="AAFI02000013">
    <property type="protein sequence ID" value="EAL69855.1"/>
    <property type="molecule type" value="Genomic_DNA"/>
</dbReference>
<dbReference type="EMBL" id="AU053808">
    <property type="status" value="NOT_ANNOTATED_CDS"/>
    <property type="molecule type" value="mRNA"/>
</dbReference>
<dbReference type="EMBL" id="AU060436">
    <property type="status" value="NOT_ANNOTATED_CDS"/>
    <property type="molecule type" value="mRNA"/>
</dbReference>
<dbReference type="RefSeq" id="XP_643729.1">
    <property type="nucleotide sequence ID" value="XM_638637.1"/>
</dbReference>
<dbReference type="SMR" id="Q8T2Q0"/>
<dbReference type="FunCoup" id="Q8T2Q0">
    <property type="interactions" value="37"/>
</dbReference>
<dbReference type="STRING" id="44689.Q8T2Q0"/>
<dbReference type="GlyGen" id="Q8T2Q0">
    <property type="glycosylation" value="9 sites"/>
</dbReference>
<dbReference type="PaxDb" id="44689-DDB0167498"/>
<dbReference type="EnsemblProtists" id="EAL69855">
    <property type="protein sequence ID" value="EAL69855"/>
    <property type="gene ID" value="DDB_G0275149"/>
</dbReference>
<dbReference type="GeneID" id="8619769"/>
<dbReference type="KEGG" id="ddi:DDB_G0275149"/>
<dbReference type="dictyBase" id="DDB_G0275149"/>
<dbReference type="VEuPathDB" id="AmoebaDB:DDB_G0275149"/>
<dbReference type="eggNOG" id="KOG0509">
    <property type="taxonomic scope" value="Eukaryota"/>
</dbReference>
<dbReference type="HOGENOM" id="CLU_395076_0_0_1"/>
<dbReference type="InParanoid" id="Q8T2Q0"/>
<dbReference type="OMA" id="ISKICVQ"/>
<dbReference type="PhylomeDB" id="Q8T2Q0"/>
<dbReference type="PRO" id="PR:Q8T2Q0"/>
<dbReference type="Proteomes" id="UP000002195">
    <property type="component" value="Chromosome 2"/>
</dbReference>
<dbReference type="GO" id="GO:0016020">
    <property type="term" value="C:membrane"/>
    <property type="evidence" value="ECO:0007669"/>
    <property type="project" value="UniProtKB-SubCell"/>
</dbReference>
<dbReference type="GO" id="GO:0019706">
    <property type="term" value="F:protein-cysteine S-palmitoyltransferase activity"/>
    <property type="evidence" value="ECO:0007669"/>
    <property type="project" value="UniProtKB-EC"/>
</dbReference>
<dbReference type="Gene3D" id="1.25.40.20">
    <property type="entry name" value="Ankyrin repeat-containing domain"/>
    <property type="match status" value="2"/>
</dbReference>
<dbReference type="InterPro" id="IPR002110">
    <property type="entry name" value="Ankyrin_rpt"/>
</dbReference>
<dbReference type="InterPro" id="IPR036770">
    <property type="entry name" value="Ankyrin_rpt-contain_sf"/>
</dbReference>
<dbReference type="InterPro" id="IPR001594">
    <property type="entry name" value="Palmitoyltrfase_DHHC"/>
</dbReference>
<dbReference type="PANTHER" id="PTHR24161">
    <property type="entry name" value="ANK_REP_REGION DOMAIN-CONTAINING PROTEIN-RELATED"/>
    <property type="match status" value="1"/>
</dbReference>
<dbReference type="PANTHER" id="PTHR24161:SF85">
    <property type="entry name" value="PALMITOYLTRANSFERASE HIP14"/>
    <property type="match status" value="1"/>
</dbReference>
<dbReference type="Pfam" id="PF00023">
    <property type="entry name" value="Ank"/>
    <property type="match status" value="2"/>
</dbReference>
<dbReference type="Pfam" id="PF12796">
    <property type="entry name" value="Ank_2"/>
    <property type="match status" value="1"/>
</dbReference>
<dbReference type="Pfam" id="PF01529">
    <property type="entry name" value="DHHC"/>
    <property type="match status" value="1"/>
</dbReference>
<dbReference type="SMART" id="SM00248">
    <property type="entry name" value="ANK"/>
    <property type="match status" value="5"/>
</dbReference>
<dbReference type="SUPFAM" id="SSF48403">
    <property type="entry name" value="Ankyrin repeat"/>
    <property type="match status" value="1"/>
</dbReference>
<dbReference type="PROSITE" id="PS50297">
    <property type="entry name" value="ANK_REP_REGION"/>
    <property type="match status" value="1"/>
</dbReference>
<dbReference type="PROSITE" id="PS50088">
    <property type="entry name" value="ANK_REPEAT"/>
    <property type="match status" value="4"/>
</dbReference>
<dbReference type="PROSITE" id="PS50216">
    <property type="entry name" value="DHHC"/>
    <property type="match status" value="1"/>
</dbReference>
<comment type="catalytic activity">
    <reaction>
        <text>L-cysteinyl-[protein] + hexadecanoyl-CoA = S-hexadecanoyl-L-cysteinyl-[protein] + CoA</text>
        <dbReference type="Rhea" id="RHEA:36683"/>
        <dbReference type="Rhea" id="RHEA-COMP:10131"/>
        <dbReference type="Rhea" id="RHEA-COMP:11032"/>
        <dbReference type="ChEBI" id="CHEBI:29950"/>
        <dbReference type="ChEBI" id="CHEBI:57287"/>
        <dbReference type="ChEBI" id="CHEBI:57379"/>
        <dbReference type="ChEBI" id="CHEBI:74151"/>
        <dbReference type="EC" id="2.3.1.225"/>
    </reaction>
</comment>
<comment type="subcellular location">
    <subcellularLocation>
        <location evidence="3">Membrane</location>
        <topology evidence="3">Multi-pass membrane protein</topology>
    </subcellularLocation>
</comment>
<comment type="domain">
    <text evidence="2">The DHHC domain is required for palmitoyltransferase activity.</text>
</comment>
<comment type="similarity">
    <text evidence="3">Belongs to the DHHC palmitoyltransferase family.</text>
</comment>
<reference evidence="6" key="1">
    <citation type="journal article" date="2002" name="Nature">
        <title>Sequence and analysis of chromosome 2 of Dictyostelium discoideum.</title>
        <authorList>
            <person name="Gloeckner G."/>
            <person name="Eichinger L."/>
            <person name="Szafranski K."/>
            <person name="Pachebat J.A."/>
            <person name="Bankier A.T."/>
            <person name="Dear P.H."/>
            <person name="Lehmann R."/>
            <person name="Baumgart C."/>
            <person name="Parra G."/>
            <person name="Abril J.F."/>
            <person name="Guigo R."/>
            <person name="Kumpf K."/>
            <person name="Tunggal B."/>
            <person name="Cox E.C."/>
            <person name="Quail M.A."/>
            <person name="Platzer M."/>
            <person name="Rosenthal A."/>
            <person name="Noegel A.A."/>
        </authorList>
    </citation>
    <scope>NUCLEOTIDE SEQUENCE [LARGE SCALE GENOMIC DNA]</scope>
    <source>
        <strain>AX4</strain>
    </source>
</reference>
<reference evidence="6 7" key="2">
    <citation type="journal article" date="2005" name="Nature">
        <title>The genome of the social amoeba Dictyostelium discoideum.</title>
        <authorList>
            <person name="Eichinger L."/>
            <person name="Pachebat J.A."/>
            <person name="Gloeckner G."/>
            <person name="Rajandream M.A."/>
            <person name="Sucgang R."/>
            <person name="Berriman M."/>
            <person name="Song J."/>
            <person name="Olsen R."/>
            <person name="Szafranski K."/>
            <person name="Xu Q."/>
            <person name="Tunggal B."/>
            <person name="Kummerfeld S."/>
            <person name="Madera M."/>
            <person name="Konfortov B.A."/>
            <person name="Rivero F."/>
            <person name="Bankier A.T."/>
            <person name="Lehmann R."/>
            <person name="Hamlin N."/>
            <person name="Davies R."/>
            <person name="Gaudet P."/>
            <person name="Fey P."/>
            <person name="Pilcher K."/>
            <person name="Chen G."/>
            <person name="Saunders D."/>
            <person name="Sodergren E.J."/>
            <person name="Davis P."/>
            <person name="Kerhornou A."/>
            <person name="Nie X."/>
            <person name="Hall N."/>
            <person name="Anjard C."/>
            <person name="Hemphill L."/>
            <person name="Bason N."/>
            <person name="Farbrother P."/>
            <person name="Desany B."/>
            <person name="Just E."/>
            <person name="Morio T."/>
            <person name="Rost R."/>
            <person name="Churcher C.M."/>
            <person name="Cooper J."/>
            <person name="Haydock S."/>
            <person name="van Driessche N."/>
            <person name="Cronin A."/>
            <person name="Goodhead I."/>
            <person name="Muzny D.M."/>
            <person name="Mourier T."/>
            <person name="Pain A."/>
            <person name="Lu M."/>
            <person name="Harper D."/>
            <person name="Lindsay R."/>
            <person name="Hauser H."/>
            <person name="James K.D."/>
            <person name="Quiles M."/>
            <person name="Madan Babu M."/>
            <person name="Saito T."/>
            <person name="Buchrieser C."/>
            <person name="Wardroper A."/>
            <person name="Felder M."/>
            <person name="Thangavelu M."/>
            <person name="Johnson D."/>
            <person name="Knights A."/>
            <person name="Loulseged H."/>
            <person name="Mungall K.L."/>
            <person name="Oliver K."/>
            <person name="Price C."/>
            <person name="Quail M.A."/>
            <person name="Urushihara H."/>
            <person name="Hernandez J."/>
            <person name="Rabbinowitsch E."/>
            <person name="Steffen D."/>
            <person name="Sanders M."/>
            <person name="Ma J."/>
            <person name="Kohara Y."/>
            <person name="Sharp S."/>
            <person name="Simmonds M.N."/>
            <person name="Spiegler S."/>
            <person name="Tivey A."/>
            <person name="Sugano S."/>
            <person name="White B."/>
            <person name="Walker D."/>
            <person name="Woodward J.R."/>
            <person name="Winckler T."/>
            <person name="Tanaka Y."/>
            <person name="Shaulsky G."/>
            <person name="Schleicher M."/>
            <person name="Weinstock G.M."/>
            <person name="Rosenthal A."/>
            <person name="Cox E.C."/>
            <person name="Chisholm R.L."/>
            <person name="Gibbs R.A."/>
            <person name="Loomis W.F."/>
            <person name="Platzer M."/>
            <person name="Kay R.R."/>
            <person name="Williams J.G."/>
            <person name="Dear P.H."/>
            <person name="Noegel A.A."/>
            <person name="Barrell B.G."/>
            <person name="Kuspa A."/>
        </authorList>
    </citation>
    <scope>NUCLEOTIDE SEQUENCE [LARGE SCALE GENOMIC DNA]</scope>
    <source>
        <strain evidence="7">AX4</strain>
    </source>
</reference>
<reference key="3">
    <citation type="journal article" date="2004" name="Nucleic Acids Res.">
        <title>Analyses of cDNAs from growth and slug stages of Dictyostelium discoideum.</title>
        <authorList>
            <person name="Urushihara H."/>
            <person name="Morio T."/>
            <person name="Saito T."/>
            <person name="Kohara Y."/>
            <person name="Koriki E."/>
            <person name="Ochiai H."/>
            <person name="Maeda M."/>
            <person name="Williams J.G."/>
            <person name="Takeuchi I."/>
            <person name="Tanaka Y."/>
        </authorList>
    </citation>
    <scope>NUCLEOTIDE SEQUENCE [LARGE SCALE MRNA] OF 184-256 AND 623-698</scope>
    <source>
        <strain>AX4</strain>
    </source>
</reference>
<protein>
    <recommendedName>
        <fullName>Putative ZDHHC-type palmitoyltransferase 6</fullName>
        <ecNumber>2.3.1.225</ecNumber>
    </recommendedName>
    <alternativeName>
        <fullName>Zinc finger DHHC domain-containing protein 6</fullName>
    </alternativeName>
</protein>
<evidence type="ECO:0000250" key="1"/>
<evidence type="ECO:0000250" key="2">
    <source>
        <dbReference type="UniProtKB" id="Q8IUH5"/>
    </source>
</evidence>
<evidence type="ECO:0000255" key="3"/>
<evidence type="ECO:0000255" key="4">
    <source>
        <dbReference type="PROSITE-ProRule" id="PRU00067"/>
    </source>
</evidence>
<evidence type="ECO:0000256" key="5">
    <source>
        <dbReference type="SAM" id="MobiDB-lite"/>
    </source>
</evidence>
<evidence type="ECO:0000305" key="6"/>
<evidence type="ECO:0000312" key="7">
    <source>
        <dbReference type="EMBL" id="EAL69855.1"/>
    </source>
</evidence>
<name>ZDHC6_DICDI</name>